<proteinExistence type="evidence at transcript level"/>
<reference key="1">
    <citation type="journal article" date="2002" name="Nature">
        <title>The genome sequence of Schizosaccharomyces pombe.</title>
        <authorList>
            <person name="Wood V."/>
            <person name="Gwilliam R."/>
            <person name="Rajandream M.A."/>
            <person name="Lyne M.H."/>
            <person name="Lyne R."/>
            <person name="Stewart A."/>
            <person name="Sgouros J.G."/>
            <person name="Peat N."/>
            <person name="Hayles J."/>
            <person name="Baker S.G."/>
            <person name="Basham D."/>
            <person name="Bowman S."/>
            <person name="Brooks K."/>
            <person name="Brown D."/>
            <person name="Brown S."/>
            <person name="Chillingworth T."/>
            <person name="Churcher C.M."/>
            <person name="Collins M."/>
            <person name="Connor R."/>
            <person name="Cronin A."/>
            <person name="Davis P."/>
            <person name="Feltwell T."/>
            <person name="Fraser A."/>
            <person name="Gentles S."/>
            <person name="Goble A."/>
            <person name="Hamlin N."/>
            <person name="Harris D.E."/>
            <person name="Hidalgo J."/>
            <person name="Hodgson G."/>
            <person name="Holroyd S."/>
            <person name="Hornsby T."/>
            <person name="Howarth S."/>
            <person name="Huckle E.J."/>
            <person name="Hunt S."/>
            <person name="Jagels K."/>
            <person name="James K.D."/>
            <person name="Jones L."/>
            <person name="Jones M."/>
            <person name="Leather S."/>
            <person name="McDonald S."/>
            <person name="McLean J."/>
            <person name="Mooney P."/>
            <person name="Moule S."/>
            <person name="Mungall K.L."/>
            <person name="Murphy L.D."/>
            <person name="Niblett D."/>
            <person name="Odell C."/>
            <person name="Oliver K."/>
            <person name="O'Neil S."/>
            <person name="Pearson D."/>
            <person name="Quail M.A."/>
            <person name="Rabbinowitsch E."/>
            <person name="Rutherford K.M."/>
            <person name="Rutter S."/>
            <person name="Saunders D."/>
            <person name="Seeger K."/>
            <person name="Sharp S."/>
            <person name="Skelton J."/>
            <person name="Simmonds M.N."/>
            <person name="Squares R."/>
            <person name="Squares S."/>
            <person name="Stevens K."/>
            <person name="Taylor K."/>
            <person name="Taylor R.G."/>
            <person name="Tivey A."/>
            <person name="Walsh S.V."/>
            <person name="Warren T."/>
            <person name="Whitehead S."/>
            <person name="Woodward J.R."/>
            <person name="Volckaert G."/>
            <person name="Aert R."/>
            <person name="Robben J."/>
            <person name="Grymonprez B."/>
            <person name="Weltjens I."/>
            <person name="Vanstreels E."/>
            <person name="Rieger M."/>
            <person name="Schaefer M."/>
            <person name="Mueller-Auer S."/>
            <person name="Gabel C."/>
            <person name="Fuchs M."/>
            <person name="Duesterhoeft A."/>
            <person name="Fritzc C."/>
            <person name="Holzer E."/>
            <person name="Moestl D."/>
            <person name="Hilbert H."/>
            <person name="Borzym K."/>
            <person name="Langer I."/>
            <person name="Beck A."/>
            <person name="Lehrach H."/>
            <person name="Reinhardt R."/>
            <person name="Pohl T.M."/>
            <person name="Eger P."/>
            <person name="Zimmermann W."/>
            <person name="Wedler H."/>
            <person name="Wambutt R."/>
            <person name="Purnelle B."/>
            <person name="Goffeau A."/>
            <person name="Cadieu E."/>
            <person name="Dreano S."/>
            <person name="Gloux S."/>
            <person name="Lelaure V."/>
            <person name="Mottier S."/>
            <person name="Galibert F."/>
            <person name="Aves S.J."/>
            <person name="Xiang Z."/>
            <person name="Hunt C."/>
            <person name="Moore K."/>
            <person name="Hurst S.M."/>
            <person name="Lucas M."/>
            <person name="Rochet M."/>
            <person name="Gaillardin C."/>
            <person name="Tallada V.A."/>
            <person name="Garzon A."/>
            <person name="Thode G."/>
            <person name="Daga R.R."/>
            <person name="Cruzado L."/>
            <person name="Jimenez J."/>
            <person name="Sanchez M."/>
            <person name="del Rey F."/>
            <person name="Benito J."/>
            <person name="Dominguez A."/>
            <person name="Revuelta J.L."/>
            <person name="Moreno S."/>
            <person name="Armstrong J."/>
            <person name="Forsburg S.L."/>
            <person name="Cerutti L."/>
            <person name="Lowe T."/>
            <person name="McCombie W.R."/>
            <person name="Paulsen I."/>
            <person name="Potashkin J."/>
            <person name="Shpakovski G.V."/>
            <person name="Ussery D."/>
            <person name="Barrell B.G."/>
            <person name="Nurse P."/>
        </authorList>
    </citation>
    <scope>NUCLEOTIDE SEQUENCE [LARGE SCALE GENOMIC DNA]</scope>
    <source>
        <strain>972 / ATCC 24843</strain>
    </source>
</reference>
<reference key="2">
    <citation type="journal article" date="2009" name="Biosci. Biotechnol. Biochem.">
        <title>Identification of Ecl family genes that extend chronological lifespan in fission yeast.</title>
        <authorList>
            <person name="Ohtsuka H."/>
            <person name="Ogawa Y."/>
            <person name="Mizuno H."/>
            <person name="Mita S."/>
            <person name="Aiba H."/>
        </authorList>
    </citation>
    <scope>FUNCTION</scope>
    <scope>INDUCTION</scope>
</reference>
<name>ECL3_SCHPO</name>
<organism>
    <name type="scientific">Schizosaccharomyces pombe (strain 972 / ATCC 24843)</name>
    <name type="common">Fission yeast</name>
    <dbReference type="NCBI Taxonomy" id="284812"/>
    <lineage>
        <taxon>Eukaryota</taxon>
        <taxon>Fungi</taxon>
        <taxon>Dikarya</taxon>
        <taxon>Ascomycota</taxon>
        <taxon>Taphrinomycotina</taxon>
        <taxon>Schizosaccharomycetes</taxon>
        <taxon>Schizosaccharomycetales</taxon>
        <taxon>Schizosaccharomycetaceae</taxon>
        <taxon>Schizosaccharomyces</taxon>
    </lineage>
</organism>
<accession>C6Y4C3</accession>
<protein>
    <recommendedName>
        <fullName>Extender of the chronological lifespan protein ecl3</fullName>
    </recommendedName>
</protein>
<feature type="chain" id="PRO_0000389116" description="Extender of the chronological lifespan protein ecl3">
    <location>
        <begin position="1"/>
        <end position="89"/>
    </location>
</feature>
<comment type="function">
    <text evidence="2">Involved in chronological cell aging.</text>
</comment>
<comment type="subcellular location">
    <subcellularLocation>
        <location evidence="1">Nucleus</location>
    </subcellularLocation>
</comment>
<comment type="induction">
    <text evidence="2">Up-regulated transiently when the growth phase was changed from the log phase to the stationary phase.</text>
</comment>
<comment type="similarity">
    <text evidence="3">Belongs to the ecl1 family.</text>
</comment>
<keyword id="KW-0539">Nucleus</keyword>
<keyword id="KW-1185">Reference proteome</keyword>
<gene>
    <name type="primary">ecl3</name>
    <name type="ORF">SPBC8E4.12c</name>
</gene>
<evidence type="ECO:0000250" key="1"/>
<evidence type="ECO:0000269" key="2">
    <source>
    </source>
</evidence>
<evidence type="ECO:0000305" key="3"/>
<dbReference type="EMBL" id="CU329671">
    <property type="protein sequence ID" value="CBA11513.1"/>
    <property type="molecule type" value="Genomic_DNA"/>
</dbReference>
<dbReference type="RefSeq" id="XP_002788945.1">
    <property type="nucleotide sequence ID" value="XM_002788899.1"/>
</dbReference>
<dbReference type="BioGRID" id="1028582">
    <property type="interactions" value="6"/>
</dbReference>
<dbReference type="STRING" id="284812.C6Y4C3"/>
<dbReference type="PaxDb" id="4896-SPBC8E4.12c.1"/>
<dbReference type="EnsemblFungi" id="SPBC8E4.12c.1">
    <property type="protein sequence ID" value="SPBC8E4.12c.1:pep"/>
    <property type="gene ID" value="SPBC8E4.12c"/>
</dbReference>
<dbReference type="PomBase" id="SPBC8E4.12c">
    <property type="gene designation" value="ecl3"/>
</dbReference>
<dbReference type="VEuPathDB" id="FungiDB:SPBC8E4.12c"/>
<dbReference type="HOGENOM" id="CLU_2456041_0_0_1"/>
<dbReference type="InParanoid" id="C6Y4C3"/>
<dbReference type="OMA" id="NATTELW"/>
<dbReference type="PRO" id="PR:C6Y4C3"/>
<dbReference type="Proteomes" id="UP000002485">
    <property type="component" value="Chromosome II"/>
</dbReference>
<dbReference type="GO" id="GO:0005634">
    <property type="term" value="C:nucleus"/>
    <property type="evidence" value="ECO:0007669"/>
    <property type="project" value="UniProtKB-SubCell"/>
</dbReference>
<dbReference type="GO" id="GO:0055062">
    <property type="term" value="P:phosphate ion homeostasis"/>
    <property type="evidence" value="ECO:0000269"/>
    <property type="project" value="PomBase"/>
</dbReference>
<dbReference type="InterPro" id="IPR024368">
    <property type="entry name" value="Ecl1/2/3"/>
</dbReference>
<dbReference type="Pfam" id="PF12855">
    <property type="entry name" value="Ecl1"/>
    <property type="match status" value="1"/>
</dbReference>
<sequence length="89" mass="10051">MDLNLCLLCGNSIDAEGLYCSNECRIQDKATTELFSDPLKSPSLNETIDYLALNYFDLFSRRSSMCSSSNSSIYSGIYYTELKNYSVEN</sequence>